<proteinExistence type="inferred from homology"/>
<gene>
    <name type="ordered locus">ML2425</name>
    <name type="ORF">B2168_F2_80</name>
</gene>
<reference key="1">
    <citation type="submission" date="1994-03" db="EMBL/GenBank/DDBJ databases">
        <authorList>
            <person name="Smith D.R."/>
            <person name="Robison K."/>
        </authorList>
    </citation>
    <scope>NUCLEOTIDE SEQUENCE [GENOMIC DNA]</scope>
</reference>
<reference key="2">
    <citation type="journal article" date="2001" name="Nature">
        <title>Massive gene decay in the leprosy bacillus.</title>
        <authorList>
            <person name="Cole S.T."/>
            <person name="Eiglmeier K."/>
            <person name="Parkhill J."/>
            <person name="James K.D."/>
            <person name="Thomson N.R."/>
            <person name="Wheeler P.R."/>
            <person name="Honore N."/>
            <person name="Garnier T."/>
            <person name="Churcher C.M."/>
            <person name="Harris D.E."/>
            <person name="Mungall K.L."/>
            <person name="Basham D."/>
            <person name="Brown D."/>
            <person name="Chillingworth T."/>
            <person name="Connor R."/>
            <person name="Davies R.M."/>
            <person name="Devlin K."/>
            <person name="Duthoy S."/>
            <person name="Feltwell T."/>
            <person name="Fraser A."/>
            <person name="Hamlin N."/>
            <person name="Holroyd S."/>
            <person name="Hornsby T."/>
            <person name="Jagels K."/>
            <person name="Lacroix C."/>
            <person name="Maclean J."/>
            <person name="Moule S."/>
            <person name="Murphy L.D."/>
            <person name="Oliver K."/>
            <person name="Quail M.A."/>
            <person name="Rajandream M.A."/>
            <person name="Rutherford K.M."/>
            <person name="Rutter S."/>
            <person name="Seeger K."/>
            <person name="Simon S."/>
            <person name="Simmonds M."/>
            <person name="Skelton J."/>
            <person name="Squares R."/>
            <person name="Squares S."/>
            <person name="Stevens K."/>
            <person name="Taylor K."/>
            <person name="Whitehead S."/>
            <person name="Woodward J.R."/>
            <person name="Barrell B.G."/>
        </authorList>
    </citation>
    <scope>NUCLEOTIDE SEQUENCE [LARGE SCALE GENOMIC DNA]</scope>
    <source>
        <strain>TN</strain>
    </source>
</reference>
<protein>
    <recommendedName>
        <fullName evidence="1">UPF0336 protein ML2425</fullName>
    </recommendedName>
</protein>
<dbReference type="EMBL" id="U00018">
    <property type="protein sequence ID" value="AAA17254.1"/>
    <property type="molecule type" value="Genomic_DNA"/>
</dbReference>
<dbReference type="EMBL" id="AL583925">
    <property type="protein sequence ID" value="CAC31941.1"/>
    <property type="molecule type" value="Genomic_DNA"/>
</dbReference>
<dbReference type="PIR" id="S72918">
    <property type="entry name" value="S72918"/>
</dbReference>
<dbReference type="RefSeq" id="NP_302569.1">
    <property type="nucleotide sequence ID" value="NC_002677.1"/>
</dbReference>
<dbReference type="RefSeq" id="WP_010908889.1">
    <property type="nucleotide sequence ID" value="NC_002677.1"/>
</dbReference>
<dbReference type="SMR" id="P54879"/>
<dbReference type="STRING" id="272631.gene:17576287"/>
<dbReference type="KEGG" id="mle:ML2425"/>
<dbReference type="PATRIC" id="fig|272631.5.peg.4663"/>
<dbReference type="Leproma" id="ML2425"/>
<dbReference type="eggNOG" id="COG2030">
    <property type="taxonomic scope" value="Bacteria"/>
</dbReference>
<dbReference type="HOGENOM" id="CLU_116276_0_1_11"/>
<dbReference type="OrthoDB" id="5415111at2"/>
<dbReference type="Proteomes" id="UP000000806">
    <property type="component" value="Chromosome"/>
</dbReference>
<dbReference type="CDD" id="cd03441">
    <property type="entry name" value="R_hydratase_like"/>
    <property type="match status" value="1"/>
</dbReference>
<dbReference type="Gene3D" id="3.10.129.10">
    <property type="entry name" value="Hotdog Thioesterase"/>
    <property type="match status" value="1"/>
</dbReference>
<dbReference type="HAMAP" id="MF_00799">
    <property type="entry name" value="UPF0336"/>
    <property type="match status" value="1"/>
</dbReference>
<dbReference type="InterPro" id="IPR039569">
    <property type="entry name" value="FAS1-like_DH_region"/>
</dbReference>
<dbReference type="InterPro" id="IPR016709">
    <property type="entry name" value="HadA-like"/>
</dbReference>
<dbReference type="InterPro" id="IPR029069">
    <property type="entry name" value="HotDog_dom_sf"/>
</dbReference>
<dbReference type="Pfam" id="PF13452">
    <property type="entry name" value="FAS1_DH_region"/>
    <property type="match status" value="1"/>
</dbReference>
<dbReference type="PIRSF" id="PIRSF018072">
    <property type="entry name" value="UCP018072"/>
    <property type="match status" value="1"/>
</dbReference>
<dbReference type="SUPFAM" id="SSF54637">
    <property type="entry name" value="Thioesterase/thiol ester dehydrase-isomerase"/>
    <property type="match status" value="1"/>
</dbReference>
<name>Y2425_MYCLE</name>
<evidence type="ECO:0000255" key="1">
    <source>
        <dbReference type="HAMAP-Rule" id="MF_00799"/>
    </source>
</evidence>
<comment type="similarity">
    <text evidence="1">Belongs to the UPF0336 family.</text>
</comment>
<feature type="chain" id="PRO_0000216136" description="UPF0336 protein ML2425">
    <location>
        <begin position="1"/>
        <end position="166"/>
    </location>
</feature>
<feature type="domain" description="MaoC-like">
    <location>
        <begin position="10"/>
        <end position="131"/>
    </location>
</feature>
<sequence>MTVPLEAEGLIGKHYRQLDHFQVGREKIREFAIAVKDDHPTHYNETAAFEAGYPALVAPLTFLAIAGRRVQLEIFTKFNIPINVARVFHRDQKFRFYRTILAQDKLYFDTYLDSVIESHGTVIAEVRSEVTDTEGKAVVTSIVTMLGELARQDATAEETVAAIASI</sequence>
<accession>P54879</accession>
<keyword id="KW-1185">Reference proteome</keyword>
<organism>
    <name type="scientific">Mycobacterium leprae (strain TN)</name>
    <dbReference type="NCBI Taxonomy" id="272631"/>
    <lineage>
        <taxon>Bacteria</taxon>
        <taxon>Bacillati</taxon>
        <taxon>Actinomycetota</taxon>
        <taxon>Actinomycetes</taxon>
        <taxon>Mycobacteriales</taxon>
        <taxon>Mycobacteriaceae</taxon>
        <taxon>Mycobacterium</taxon>
    </lineage>
</organism>